<keyword id="KW-0002">3D-structure</keyword>
<keyword id="KW-0963">Cytoplasm</keyword>
<keyword id="KW-0967">Endosome</keyword>
<keyword id="KW-0653">Protein transport</keyword>
<keyword id="KW-1185">Reference proteome</keyword>
<keyword id="KW-0813">Transport</keyword>
<comment type="function">
    <text evidence="3 4">Involved in a late step in sorting of cargo proteins of the multivesicular body (MVB) for incorporation into intralumenal vesicles. The lumenal sequestrated membrane proteins are targeted into the vacuole after fusion of the endosome with the vacuole. Regulates the recruitment of VPS4 to the ESCRT-III complex, probably in conjunction with DID2, and VPS4 catalyzes the disassembly of the ESCRT-III complex.</text>
</comment>
<comment type="subunit">
    <text evidence="3 4">Interacts with DID2. Interacts with VPS4 (via MIT domain); the interaction prevents VPS4 oligomerization, competes with the binding of VTA1 to VSP4 and diminishes the ATPase activity of VSP4.</text>
</comment>
<comment type="interaction">
    <interactant intactId="EBI-28245">
        <id>P53843</id>
    </interactant>
    <interactant intactId="EBI-2053489">
        <id>P69771</id>
        <label>DID2</label>
    </interactant>
    <organismsDiffer>false</organismsDiffer>
    <experiments>4</experiments>
</comment>
<comment type="subcellular location">
    <subcellularLocation>
        <location>Cytoplasm</location>
    </subcellularLocation>
    <subcellularLocation>
        <location>Endosome</location>
    </subcellularLocation>
    <text>The endosomal location appears to be dependent on DID2.</text>
</comment>
<comment type="miscellaneous">
    <text evidence="2">Present with 4760 molecules/cell in log phase SD medium.</text>
</comment>
<comment type="similarity">
    <text evidence="5">Belongs to the IST1 family.</text>
</comment>
<proteinExistence type="evidence at protein level"/>
<sequence>MAPSMIPFTIKLKTCLKMCIQRLRYAQEKQQAIAKQSRRQVAQLLLTNKEQKAHYRVETLIHDDIHIELLEILELYCELLLARVQVINDISTEEQLVKEHMDDGINEAIRSLIYAILFVDEVKELSQLKDLMAWKINVEFVNGVIADHIDVPEKIIKKCSPSVPKEELVDLYLKEIAKTYDVPYSKLENSLSSSSSNISSDFSDPSGDIEDNDEEKPILALDNDDNDNADAKHPITVKKPRQNSENIKNELKIPKDIKKEVIEKKQSEKKTTKRKTKKEQENDELDELKKRFDALRRK</sequence>
<feature type="chain" id="PRO_0000076227" description="Vacuolar protein sorting-associated protein IST1">
    <location>
        <begin position="1"/>
        <end position="298"/>
    </location>
</feature>
<feature type="region of interest" description="Disordered" evidence="1">
    <location>
        <begin position="190"/>
        <end position="283"/>
    </location>
</feature>
<feature type="region of interest" description="Interaction with VPS4">
    <location>
        <begin position="251"/>
        <end position="298"/>
    </location>
</feature>
<feature type="short sequence motif" description="MIT-interacting motif">
    <location>
        <begin position="286"/>
        <end position="296"/>
    </location>
</feature>
<feature type="compositionally biased region" description="Low complexity" evidence="1">
    <location>
        <begin position="190"/>
        <end position="206"/>
    </location>
</feature>
<feature type="compositionally biased region" description="Basic and acidic residues" evidence="1">
    <location>
        <begin position="247"/>
        <end position="270"/>
    </location>
</feature>
<feature type="helix" evidence="6">
    <location>
        <begin position="8"/>
        <end position="46"/>
    </location>
</feature>
<feature type="helix" evidence="6">
    <location>
        <begin position="50"/>
        <end position="82"/>
    </location>
</feature>
<feature type="helix" evidence="6">
    <location>
        <begin position="84"/>
        <end position="87"/>
    </location>
</feature>
<feature type="helix" evidence="6">
    <location>
        <begin position="93"/>
        <end position="99"/>
    </location>
</feature>
<feature type="strand" evidence="6">
    <location>
        <begin position="100"/>
        <end position="104"/>
    </location>
</feature>
<feature type="helix" evidence="6">
    <location>
        <begin position="105"/>
        <end position="115"/>
    </location>
</feature>
<feature type="helix" evidence="6">
    <location>
        <begin position="116"/>
        <end position="118"/>
    </location>
</feature>
<feature type="helix" evidence="6">
    <location>
        <begin position="125"/>
        <end position="135"/>
    </location>
</feature>
<feature type="helix" evidence="6">
    <location>
        <begin position="138"/>
        <end position="147"/>
    </location>
</feature>
<feature type="helix" evidence="6">
    <location>
        <begin position="153"/>
        <end position="159"/>
    </location>
</feature>
<feature type="helix" evidence="6">
    <location>
        <begin position="166"/>
        <end position="179"/>
    </location>
</feature>
<feature type="helix" evidence="6">
    <location>
        <begin position="184"/>
        <end position="188"/>
    </location>
</feature>
<evidence type="ECO:0000256" key="1">
    <source>
        <dbReference type="SAM" id="MobiDB-lite"/>
    </source>
</evidence>
<evidence type="ECO:0000269" key="2">
    <source>
    </source>
</evidence>
<evidence type="ECO:0000269" key="3">
    <source>
    </source>
</evidence>
<evidence type="ECO:0000269" key="4">
    <source>
    </source>
</evidence>
<evidence type="ECO:0000305" key="5"/>
<evidence type="ECO:0007829" key="6">
    <source>
        <dbReference type="PDB" id="3GGY"/>
    </source>
</evidence>
<organism>
    <name type="scientific">Saccharomyces cerevisiae (strain ATCC 204508 / S288c)</name>
    <name type="common">Baker's yeast</name>
    <dbReference type="NCBI Taxonomy" id="559292"/>
    <lineage>
        <taxon>Eukaryota</taxon>
        <taxon>Fungi</taxon>
        <taxon>Dikarya</taxon>
        <taxon>Ascomycota</taxon>
        <taxon>Saccharomycotina</taxon>
        <taxon>Saccharomycetes</taxon>
        <taxon>Saccharomycetales</taxon>
        <taxon>Saccharomycetaceae</taxon>
        <taxon>Saccharomyces</taxon>
    </lineage>
</organism>
<name>IST1_YEAST</name>
<gene>
    <name type="primary">IST1</name>
    <name type="ordered locus">YNL265C</name>
    <name type="ORF">N0809</name>
</gene>
<dbReference type="EMBL" id="X92494">
    <property type="status" value="NOT_ANNOTATED_CDS"/>
    <property type="molecule type" value="Genomic_DNA"/>
</dbReference>
<dbReference type="EMBL" id="Z71542">
    <property type="protein sequence ID" value="CAA96172.1"/>
    <property type="molecule type" value="Genomic_DNA"/>
</dbReference>
<dbReference type="EMBL" id="BK006947">
    <property type="protein sequence ID" value="DAA10294.1"/>
    <property type="molecule type" value="Genomic_DNA"/>
</dbReference>
<dbReference type="PIR" id="S63238">
    <property type="entry name" value="S63238"/>
</dbReference>
<dbReference type="RefSeq" id="NP_014134.1">
    <property type="nucleotide sequence ID" value="NM_001183103.1"/>
</dbReference>
<dbReference type="PDB" id="3GGY">
    <property type="method" value="X-ray"/>
    <property type="resolution" value="1.70 A"/>
    <property type="chains" value="A/B=1-193"/>
</dbReference>
<dbReference type="PDB" id="3GGZ">
    <property type="method" value="X-ray"/>
    <property type="resolution" value="3.80 A"/>
    <property type="chains" value="A/B/C/D=1-193"/>
</dbReference>
<dbReference type="PDBsum" id="3GGY"/>
<dbReference type="PDBsum" id="3GGZ"/>
<dbReference type="SMR" id="P53843"/>
<dbReference type="BioGRID" id="35574">
    <property type="interactions" value="70"/>
</dbReference>
<dbReference type="DIP" id="DIP-6713N"/>
<dbReference type="FunCoup" id="P53843">
    <property type="interactions" value="903"/>
</dbReference>
<dbReference type="IntAct" id="P53843">
    <property type="interactions" value="31"/>
</dbReference>
<dbReference type="MINT" id="P53843"/>
<dbReference type="STRING" id="4932.YNL265C"/>
<dbReference type="TCDB" id="3.A.31.1.1">
    <property type="family name" value="the endosomal sorting complexes required for transport iii (escrt-iii) family"/>
</dbReference>
<dbReference type="iPTMnet" id="P53843"/>
<dbReference type="PaxDb" id="4932-YNL265C"/>
<dbReference type="PeptideAtlas" id="P53843"/>
<dbReference type="EnsemblFungi" id="YNL265C_mRNA">
    <property type="protein sequence ID" value="YNL265C"/>
    <property type="gene ID" value="YNL265C"/>
</dbReference>
<dbReference type="GeneID" id="855456"/>
<dbReference type="KEGG" id="sce:YNL265C"/>
<dbReference type="AGR" id="SGD:S000005209"/>
<dbReference type="SGD" id="S000005209">
    <property type="gene designation" value="IST1"/>
</dbReference>
<dbReference type="VEuPathDB" id="FungiDB:YNL265C"/>
<dbReference type="eggNOG" id="KOG2027">
    <property type="taxonomic scope" value="Eukaryota"/>
</dbReference>
<dbReference type="GeneTree" id="ENSGT00390000007453"/>
<dbReference type="HOGENOM" id="CLU_037652_2_0_1"/>
<dbReference type="InParanoid" id="P53843"/>
<dbReference type="OMA" id="HEVREFT"/>
<dbReference type="OrthoDB" id="29853at2759"/>
<dbReference type="BioCyc" id="YEAST:G3O-33261-MONOMER"/>
<dbReference type="Reactome" id="R-SCE-6798695">
    <property type="pathway name" value="Neutrophil degranulation"/>
</dbReference>
<dbReference type="Reactome" id="R-SCE-9668328">
    <property type="pathway name" value="Sealing of the nuclear envelope (NE) by ESCRT-III"/>
</dbReference>
<dbReference type="BioGRID-ORCS" id="855456">
    <property type="hits" value="1 hit in 10 CRISPR screens"/>
</dbReference>
<dbReference type="EvolutionaryTrace" id="P53843"/>
<dbReference type="PRO" id="PR:P53843"/>
<dbReference type="Proteomes" id="UP000002311">
    <property type="component" value="Chromosome XIV"/>
</dbReference>
<dbReference type="RNAct" id="P53843">
    <property type="molecule type" value="protein"/>
</dbReference>
<dbReference type="GO" id="GO:0005737">
    <property type="term" value="C:cytoplasm"/>
    <property type="evidence" value="ECO:0000314"/>
    <property type="project" value="SGD"/>
</dbReference>
<dbReference type="GO" id="GO:0005768">
    <property type="term" value="C:endosome"/>
    <property type="evidence" value="ECO:0000314"/>
    <property type="project" value="SGD"/>
</dbReference>
<dbReference type="GO" id="GO:0042030">
    <property type="term" value="F:ATPase inhibitor activity"/>
    <property type="evidence" value="ECO:0000314"/>
    <property type="project" value="SGD"/>
</dbReference>
<dbReference type="GO" id="GO:0099638">
    <property type="term" value="P:endosome to plasma membrane protein transport"/>
    <property type="evidence" value="ECO:0000315"/>
    <property type="project" value="SGD"/>
</dbReference>
<dbReference type="GO" id="GO:0032511">
    <property type="term" value="P:late endosome to vacuole transport via multivesicular body sorting pathway"/>
    <property type="evidence" value="ECO:0000315"/>
    <property type="project" value="SGD"/>
</dbReference>
<dbReference type="GO" id="GO:0008104">
    <property type="term" value="P:protein localization"/>
    <property type="evidence" value="ECO:0000318"/>
    <property type="project" value="GO_Central"/>
</dbReference>
<dbReference type="FunFam" id="1.20.1260.60:FF:000002">
    <property type="entry name" value="Vacuolar protein sorting-associated protein IST1"/>
    <property type="match status" value="1"/>
</dbReference>
<dbReference type="Gene3D" id="1.20.1260.60">
    <property type="entry name" value="Vacuolar protein sorting-associated protein Ist1"/>
    <property type="match status" value="1"/>
</dbReference>
<dbReference type="InterPro" id="IPR005061">
    <property type="entry name" value="Ist1"/>
</dbReference>
<dbReference type="InterPro" id="IPR042277">
    <property type="entry name" value="IST1-like"/>
</dbReference>
<dbReference type="PANTHER" id="PTHR12161">
    <property type="entry name" value="IST1 FAMILY MEMBER"/>
    <property type="match status" value="1"/>
</dbReference>
<dbReference type="PANTHER" id="PTHR12161:SF5">
    <property type="entry name" value="IST1 HOMOLOG"/>
    <property type="match status" value="1"/>
</dbReference>
<dbReference type="Pfam" id="PF03398">
    <property type="entry name" value="Ist1"/>
    <property type="match status" value="1"/>
</dbReference>
<reference key="1">
    <citation type="journal article" date="1996" name="Yeast">
        <title>The sequence of a 24,152 bp segment from the left arm of chromosome XIV from Saccharomyces cerevisiae between the BNI1 and the POL2 genes.</title>
        <authorList>
            <person name="Sen-Gupta M."/>
            <person name="Lyck R."/>
            <person name="Fleig U."/>
            <person name="Niedenthal R.K."/>
            <person name="Hegemann J.H."/>
        </authorList>
    </citation>
    <scope>NUCLEOTIDE SEQUENCE [GENOMIC DNA]</scope>
    <source>
        <strain>ATCC 96604 / S288c / FY1679</strain>
    </source>
</reference>
<reference key="2">
    <citation type="journal article" date="1997" name="Nature">
        <title>The nucleotide sequence of Saccharomyces cerevisiae chromosome XIV and its evolutionary implications.</title>
        <authorList>
            <person name="Philippsen P."/>
            <person name="Kleine K."/>
            <person name="Poehlmann R."/>
            <person name="Duesterhoeft A."/>
            <person name="Hamberg K."/>
            <person name="Hegemann J.H."/>
            <person name="Obermaier B."/>
            <person name="Urrestarazu L.A."/>
            <person name="Aert R."/>
            <person name="Albermann K."/>
            <person name="Altmann R."/>
            <person name="Andre B."/>
            <person name="Baladron V."/>
            <person name="Ballesta J.P.G."/>
            <person name="Becam A.-M."/>
            <person name="Beinhauer J.D."/>
            <person name="Boskovic J."/>
            <person name="Buitrago M.J."/>
            <person name="Bussereau F."/>
            <person name="Coster F."/>
            <person name="Crouzet M."/>
            <person name="D'Angelo M."/>
            <person name="Dal Pero F."/>
            <person name="De Antoni A."/>
            <person name="del Rey F."/>
            <person name="Doignon F."/>
            <person name="Domdey H."/>
            <person name="Dubois E."/>
            <person name="Fiedler T.A."/>
            <person name="Fleig U."/>
            <person name="Floeth M."/>
            <person name="Fritz C."/>
            <person name="Gaillardin C."/>
            <person name="Garcia-Cantalejo J.M."/>
            <person name="Glansdorff N."/>
            <person name="Goffeau A."/>
            <person name="Gueldener U."/>
            <person name="Herbert C.J."/>
            <person name="Heumann K."/>
            <person name="Heuss-Neitzel D."/>
            <person name="Hilbert H."/>
            <person name="Hinni K."/>
            <person name="Iraqui Houssaini I."/>
            <person name="Jacquet M."/>
            <person name="Jimenez A."/>
            <person name="Jonniaux J.-L."/>
            <person name="Karpfinger-Hartl L."/>
            <person name="Lanfranchi G."/>
            <person name="Lepingle A."/>
            <person name="Levesque H."/>
            <person name="Lyck R."/>
            <person name="Maftahi M."/>
            <person name="Mallet L."/>
            <person name="Maurer C.T.C."/>
            <person name="Messenguy F."/>
            <person name="Mewes H.-W."/>
            <person name="Moestl D."/>
            <person name="Nasr F."/>
            <person name="Nicaud J.-M."/>
            <person name="Niedenthal R.K."/>
            <person name="Pandolfo D."/>
            <person name="Pierard A."/>
            <person name="Piravandi E."/>
            <person name="Planta R.J."/>
            <person name="Pohl T.M."/>
            <person name="Purnelle B."/>
            <person name="Rebischung C."/>
            <person name="Remacha M.A."/>
            <person name="Revuelta J.L."/>
            <person name="Rinke M."/>
            <person name="Saiz J.E."/>
            <person name="Sartorello F."/>
            <person name="Scherens B."/>
            <person name="Sen-Gupta M."/>
            <person name="Soler-Mira A."/>
            <person name="Urbanus J.H.M."/>
            <person name="Valle G."/>
            <person name="Van Dyck L."/>
            <person name="Verhasselt P."/>
            <person name="Vierendeels F."/>
            <person name="Vissers S."/>
            <person name="Voet M."/>
            <person name="Volckaert G."/>
            <person name="Wach A."/>
            <person name="Wambutt R."/>
            <person name="Wedler H."/>
            <person name="Zollner A."/>
            <person name="Hani J."/>
        </authorList>
    </citation>
    <scope>NUCLEOTIDE SEQUENCE [LARGE SCALE GENOMIC DNA]</scope>
    <source>
        <strain>ATCC 204508 / S288c</strain>
    </source>
</reference>
<reference key="3">
    <citation type="journal article" date="2014" name="G3 (Bethesda)">
        <title>The reference genome sequence of Saccharomyces cerevisiae: Then and now.</title>
        <authorList>
            <person name="Engel S.R."/>
            <person name="Dietrich F.S."/>
            <person name="Fisk D.G."/>
            <person name="Binkley G."/>
            <person name="Balakrishnan R."/>
            <person name="Costanzo M.C."/>
            <person name="Dwight S.S."/>
            <person name="Hitz B.C."/>
            <person name="Karra K."/>
            <person name="Nash R.S."/>
            <person name="Weng S."/>
            <person name="Wong E.D."/>
            <person name="Lloyd P."/>
            <person name="Skrzypek M.S."/>
            <person name="Miyasato S.R."/>
            <person name="Simison M."/>
            <person name="Cherry J.M."/>
        </authorList>
    </citation>
    <scope>GENOME REANNOTATION</scope>
    <source>
        <strain>ATCC 204508 / S288c</strain>
    </source>
</reference>
<reference key="4">
    <citation type="journal article" date="2003" name="Nature">
        <title>Global analysis of protein expression in yeast.</title>
        <authorList>
            <person name="Ghaemmaghami S."/>
            <person name="Huh W.-K."/>
            <person name="Bower K."/>
            <person name="Howson R.W."/>
            <person name="Belle A."/>
            <person name="Dephoure N."/>
            <person name="O'Shea E.K."/>
            <person name="Weissman J.S."/>
        </authorList>
    </citation>
    <scope>LEVEL OF PROTEIN EXPRESSION [LARGE SCALE ANALYSIS]</scope>
</reference>
<reference key="5">
    <citation type="journal article" date="2008" name="Mol. Biol. Cell">
        <title>Ist1 regulates Vps4 localization and assembly.</title>
        <authorList>
            <person name="Dimaano C."/>
            <person name="Jones C.B."/>
            <person name="Hanono A."/>
            <person name="Curtiss M."/>
            <person name="Babst M."/>
        </authorList>
    </citation>
    <scope>FUNCTION</scope>
    <scope>INTERACTION WITH VPS4</scope>
    <scope>SUBCELLULAR LOCATION</scope>
</reference>
<reference key="6">
    <citation type="journal article" date="2008" name="Mol. Biol. Cell">
        <title>Novel Ist1-Did2 complex functions at a late step in multivesicular body sorting.</title>
        <authorList>
            <person name="Rue S.M."/>
            <person name="Mattei S."/>
            <person name="Saksena S."/>
            <person name="Emr S.D."/>
        </authorList>
    </citation>
    <scope>FUNCTION</scope>
    <scope>SUBCELLULAR LOCATION</scope>
    <scope>INTERACTION WITH DID2 AND VPS4</scope>
</reference>
<protein>
    <recommendedName>
        <fullName>Vacuolar protein sorting-associated protein IST1</fullName>
    </recommendedName>
    <alternativeName>
        <fullName>Increased sodium tolerance protein 1</fullName>
    </alternativeName>
</protein>
<accession>P53843</accession>
<accession>D6W0S8</accession>